<accession>Q0ZIW6</accession>
<sequence>MMLEHVLVLSAYLFSIGIYGLITSRNMVRALMCLELILNAVNINFVTFSDFFDNRQLKGDIFSIFVIAIAAAEAAIGPAIVSSIYRNRKSTRINQSNLLNK</sequence>
<feature type="chain" id="PRO_0000360370" description="NAD(P)H-quinone oxidoreductase subunit 4L, chloroplastic">
    <location>
        <begin position="1"/>
        <end position="101"/>
    </location>
</feature>
<feature type="transmembrane region" description="Helical" evidence="1">
    <location>
        <begin position="2"/>
        <end position="22"/>
    </location>
</feature>
<feature type="transmembrane region" description="Helical" evidence="1">
    <location>
        <begin position="32"/>
        <end position="52"/>
    </location>
</feature>
<feature type="transmembrane region" description="Helical" evidence="1">
    <location>
        <begin position="61"/>
        <end position="81"/>
    </location>
</feature>
<comment type="function">
    <text evidence="1">NDH shuttles electrons from NAD(P)H:plastoquinone, via FMN and iron-sulfur (Fe-S) centers, to quinones in the photosynthetic chain and possibly in a chloroplast respiratory chain. The immediate electron acceptor for the enzyme in this species is believed to be plastoquinone. Couples the redox reaction to proton translocation, and thus conserves the redox energy in a proton gradient.</text>
</comment>
<comment type="catalytic activity">
    <reaction evidence="1">
        <text>a plastoquinone + NADH + (n+1) H(+)(in) = a plastoquinol + NAD(+) + n H(+)(out)</text>
        <dbReference type="Rhea" id="RHEA:42608"/>
        <dbReference type="Rhea" id="RHEA-COMP:9561"/>
        <dbReference type="Rhea" id="RHEA-COMP:9562"/>
        <dbReference type="ChEBI" id="CHEBI:15378"/>
        <dbReference type="ChEBI" id="CHEBI:17757"/>
        <dbReference type="ChEBI" id="CHEBI:57540"/>
        <dbReference type="ChEBI" id="CHEBI:57945"/>
        <dbReference type="ChEBI" id="CHEBI:62192"/>
    </reaction>
</comment>
<comment type="catalytic activity">
    <reaction evidence="1">
        <text>a plastoquinone + NADPH + (n+1) H(+)(in) = a plastoquinol + NADP(+) + n H(+)(out)</text>
        <dbReference type="Rhea" id="RHEA:42612"/>
        <dbReference type="Rhea" id="RHEA-COMP:9561"/>
        <dbReference type="Rhea" id="RHEA-COMP:9562"/>
        <dbReference type="ChEBI" id="CHEBI:15378"/>
        <dbReference type="ChEBI" id="CHEBI:17757"/>
        <dbReference type="ChEBI" id="CHEBI:57783"/>
        <dbReference type="ChEBI" id="CHEBI:58349"/>
        <dbReference type="ChEBI" id="CHEBI:62192"/>
    </reaction>
</comment>
<comment type="subunit">
    <text evidence="1">NDH is composed of at least 16 different subunits, 5 of which are encoded in the nucleus.</text>
</comment>
<comment type="subcellular location">
    <subcellularLocation>
        <location evidence="1">Plastid</location>
        <location evidence="1">Chloroplast thylakoid membrane</location>
        <topology evidence="1">Multi-pass membrane protein</topology>
    </subcellularLocation>
</comment>
<comment type="similarity">
    <text evidence="1">Belongs to the complex I subunit 4L family.</text>
</comment>
<organism>
    <name type="scientific">Vitis vinifera</name>
    <name type="common">Grape</name>
    <dbReference type="NCBI Taxonomy" id="29760"/>
    <lineage>
        <taxon>Eukaryota</taxon>
        <taxon>Viridiplantae</taxon>
        <taxon>Streptophyta</taxon>
        <taxon>Embryophyta</taxon>
        <taxon>Tracheophyta</taxon>
        <taxon>Spermatophyta</taxon>
        <taxon>Magnoliopsida</taxon>
        <taxon>eudicotyledons</taxon>
        <taxon>Gunneridae</taxon>
        <taxon>Pentapetalae</taxon>
        <taxon>rosids</taxon>
        <taxon>Vitales</taxon>
        <taxon>Vitaceae</taxon>
        <taxon>Viteae</taxon>
        <taxon>Vitis</taxon>
    </lineage>
</organism>
<gene>
    <name evidence="1" type="primary">ndhE</name>
    <name type="ORF">GSVIVT00013262001</name>
    <name type="ORF">VIVICP076</name>
</gene>
<dbReference type="EC" id="7.1.1.-" evidence="1"/>
<dbReference type="EMBL" id="DQ424856">
    <property type="protein sequence ID" value="ABE47587.1"/>
    <property type="molecule type" value="Genomic_DNA"/>
</dbReference>
<dbReference type="RefSeq" id="YP_567130.1">
    <property type="nucleotide sequence ID" value="NC_007957.1"/>
</dbReference>
<dbReference type="SMR" id="Q0ZIW6"/>
<dbReference type="FunCoup" id="Q0ZIW6">
    <property type="interactions" value="64"/>
</dbReference>
<dbReference type="STRING" id="29760.Q0ZIW6"/>
<dbReference type="GeneID" id="4025041"/>
<dbReference type="KEGG" id="vvi:4025041"/>
<dbReference type="InParanoid" id="Q0ZIW6"/>
<dbReference type="OrthoDB" id="880195at71240"/>
<dbReference type="Proteomes" id="UP000009183">
    <property type="component" value="Chloroplast"/>
</dbReference>
<dbReference type="GO" id="GO:0009535">
    <property type="term" value="C:chloroplast thylakoid membrane"/>
    <property type="evidence" value="ECO:0007669"/>
    <property type="project" value="UniProtKB-SubCell"/>
</dbReference>
<dbReference type="GO" id="GO:0030964">
    <property type="term" value="C:NADH dehydrogenase complex"/>
    <property type="evidence" value="ECO:0000318"/>
    <property type="project" value="GO_Central"/>
</dbReference>
<dbReference type="GO" id="GO:0016655">
    <property type="term" value="F:oxidoreductase activity, acting on NAD(P)H, quinone or similar compound as acceptor"/>
    <property type="evidence" value="ECO:0007669"/>
    <property type="project" value="UniProtKB-UniRule"/>
</dbReference>
<dbReference type="GO" id="GO:0048038">
    <property type="term" value="F:quinone binding"/>
    <property type="evidence" value="ECO:0007669"/>
    <property type="project" value="UniProtKB-KW"/>
</dbReference>
<dbReference type="GO" id="GO:0042773">
    <property type="term" value="P:ATP synthesis coupled electron transport"/>
    <property type="evidence" value="ECO:0007669"/>
    <property type="project" value="InterPro"/>
</dbReference>
<dbReference type="GO" id="GO:0019684">
    <property type="term" value="P:photosynthesis, light reaction"/>
    <property type="evidence" value="ECO:0007669"/>
    <property type="project" value="UniProtKB-UniRule"/>
</dbReference>
<dbReference type="FunFam" id="1.10.287.3510:FF:000001">
    <property type="entry name" value="NADH-quinone oxidoreductase subunit K"/>
    <property type="match status" value="1"/>
</dbReference>
<dbReference type="Gene3D" id="1.10.287.3510">
    <property type="match status" value="1"/>
</dbReference>
<dbReference type="HAMAP" id="MF_01456">
    <property type="entry name" value="NDH1_NuoK"/>
    <property type="match status" value="1"/>
</dbReference>
<dbReference type="InterPro" id="IPR001133">
    <property type="entry name" value="NADH_UbQ_OxRdtase_chain4L/K"/>
</dbReference>
<dbReference type="InterPro" id="IPR039428">
    <property type="entry name" value="NUOK/Mnh_C1-like"/>
</dbReference>
<dbReference type="NCBIfam" id="NF004320">
    <property type="entry name" value="PRK05715.1-2"/>
    <property type="match status" value="1"/>
</dbReference>
<dbReference type="NCBIfam" id="NF004322">
    <property type="entry name" value="PRK05715.1-4"/>
    <property type="match status" value="1"/>
</dbReference>
<dbReference type="NCBIfam" id="NF004323">
    <property type="entry name" value="PRK05715.1-5"/>
    <property type="match status" value="1"/>
</dbReference>
<dbReference type="PANTHER" id="PTHR11434:SF16">
    <property type="entry name" value="NADH-UBIQUINONE OXIDOREDUCTASE CHAIN 4L"/>
    <property type="match status" value="1"/>
</dbReference>
<dbReference type="PANTHER" id="PTHR11434">
    <property type="entry name" value="NADH-UBIQUINONE OXIDOREDUCTASE SUBUNIT ND4L"/>
    <property type="match status" value="1"/>
</dbReference>
<dbReference type="Pfam" id="PF00420">
    <property type="entry name" value="Oxidored_q2"/>
    <property type="match status" value="1"/>
</dbReference>
<geneLocation type="chloroplast"/>
<evidence type="ECO:0000255" key="1">
    <source>
        <dbReference type="HAMAP-Rule" id="MF_01456"/>
    </source>
</evidence>
<proteinExistence type="inferred from homology"/>
<keyword id="KW-0150">Chloroplast</keyword>
<keyword id="KW-0472">Membrane</keyword>
<keyword id="KW-0520">NAD</keyword>
<keyword id="KW-0521">NADP</keyword>
<keyword id="KW-0934">Plastid</keyword>
<keyword id="KW-0618">Plastoquinone</keyword>
<keyword id="KW-0874">Quinone</keyword>
<keyword id="KW-1185">Reference proteome</keyword>
<keyword id="KW-0793">Thylakoid</keyword>
<keyword id="KW-1278">Translocase</keyword>
<keyword id="KW-0812">Transmembrane</keyword>
<keyword id="KW-1133">Transmembrane helix</keyword>
<keyword id="KW-0813">Transport</keyword>
<reference key="1">
    <citation type="journal article" date="2006" name="BMC Evol. Biol.">
        <title>Phylogenetic analyses of Vitis (Vitaceae) based on complete chloroplast genome sequences: effects of taxon sampling and phylogenetic methods on resolving relationships among rosids.</title>
        <authorList>
            <person name="Jansen R.K."/>
            <person name="Kaittanis C."/>
            <person name="Lee S.-B."/>
            <person name="Saski C."/>
            <person name="Tomkins J."/>
            <person name="Alverson A.J."/>
            <person name="Daniell H."/>
        </authorList>
    </citation>
    <scope>NUCLEOTIDE SEQUENCE [LARGE SCALE GENOMIC DNA]</scope>
    <source>
        <strain>cv. Maxxa</strain>
    </source>
</reference>
<reference key="2">
    <citation type="journal article" date="2007" name="Nature">
        <title>The grapevine genome sequence suggests ancestral hexaploidization in major angiosperm phyla.</title>
        <authorList>
            <person name="Jaillon O."/>
            <person name="Aury J.-M."/>
            <person name="Noel B."/>
            <person name="Policriti A."/>
            <person name="Clepet C."/>
            <person name="Casagrande A."/>
            <person name="Choisne N."/>
            <person name="Aubourg S."/>
            <person name="Vitulo N."/>
            <person name="Jubin C."/>
            <person name="Vezzi A."/>
            <person name="Legeai F."/>
            <person name="Hugueney P."/>
            <person name="Dasilva C."/>
            <person name="Horner D."/>
            <person name="Mica E."/>
            <person name="Jublot D."/>
            <person name="Poulain J."/>
            <person name="Bruyere C."/>
            <person name="Billault A."/>
            <person name="Segurens B."/>
            <person name="Gouyvenoux M."/>
            <person name="Ugarte E."/>
            <person name="Cattonaro F."/>
            <person name="Anthouard V."/>
            <person name="Vico V."/>
            <person name="Del Fabbro C."/>
            <person name="Alaux M."/>
            <person name="Di Gaspero G."/>
            <person name="Dumas V."/>
            <person name="Felice N."/>
            <person name="Paillard S."/>
            <person name="Juman I."/>
            <person name="Moroldo M."/>
            <person name="Scalabrin S."/>
            <person name="Canaguier A."/>
            <person name="Le Clainche I."/>
            <person name="Malacrida G."/>
            <person name="Durand E."/>
            <person name="Pesole G."/>
            <person name="Laucou V."/>
            <person name="Chatelet P."/>
            <person name="Merdinoglu D."/>
            <person name="Delledonne M."/>
            <person name="Pezzotti M."/>
            <person name="Lecharny A."/>
            <person name="Scarpelli C."/>
            <person name="Artiguenave F."/>
            <person name="Pe M.E."/>
            <person name="Valle G."/>
            <person name="Morgante M."/>
            <person name="Caboche M."/>
            <person name="Adam-Blondon A.-F."/>
            <person name="Weissenbach J."/>
            <person name="Quetier F."/>
            <person name="Wincker P."/>
        </authorList>
    </citation>
    <scope>NUCLEOTIDE SEQUENCE [LARGE SCALE GENOMIC DNA]</scope>
    <source>
        <strain>cv. Pinot noir / PN40024</strain>
    </source>
</reference>
<name>NU4LC_VITVI</name>
<protein>
    <recommendedName>
        <fullName evidence="1">NAD(P)H-quinone oxidoreductase subunit 4L, chloroplastic</fullName>
        <ecNumber evidence="1">7.1.1.-</ecNumber>
    </recommendedName>
    <alternativeName>
        <fullName evidence="1">NAD(P)H dehydrogenase subunit 4L</fullName>
    </alternativeName>
    <alternativeName>
        <fullName evidence="1">NADH-plastoquinone oxidoreductase subunit 4L</fullName>
    </alternativeName>
</protein>